<reference key="1">
    <citation type="journal article" date="2007" name="J. Virol.">
        <title>Comparative analysis of twelve genomes of three novel group 2c and group 2d coronaviruses reveals unique group and subgroup features.</title>
        <authorList>
            <person name="Woo P.C.Y."/>
            <person name="Wang M."/>
            <person name="Lau S.K.P."/>
            <person name="Xu H.F."/>
            <person name="Poon R.W.S."/>
            <person name="Guo R."/>
            <person name="Wong B.H.L."/>
            <person name="Gao K."/>
            <person name="Tsoi H.-W."/>
            <person name="Huang Y."/>
            <person name="Li K.S.M."/>
            <person name="Lam C.S.F."/>
            <person name="Chan K.-H."/>
            <person name="Zheng B.-J."/>
            <person name="Yuen K.-Y."/>
        </authorList>
    </citation>
    <scope>NUCLEOTIDE SEQUENCE [GENOMIC RNA]</scope>
    <source>
        <strain>Isolate HKU4-1</strain>
    </source>
</reference>
<accession>P0C6T4</accession>
<accession>A3EX93</accession>
<organismHost>
    <name type="scientific">Tylonycteris pachypus</name>
    <name type="common">Lesser bamboo bat</name>
    <name type="synonym">Vespertilio pachypus</name>
    <dbReference type="NCBI Taxonomy" id="258959"/>
</organismHost>
<keyword id="KW-0002">3D-structure</keyword>
<keyword id="KW-1072">Activation of host autophagy by virus</keyword>
<keyword id="KW-1132">Decay of host mRNAs by virus</keyword>
<keyword id="KW-1015">Disulfide bond</keyword>
<keyword id="KW-0255">Endonuclease</keyword>
<keyword id="KW-1262">Eukaryotic host gene expression shutoff by virus</keyword>
<keyword id="KW-1193">Eukaryotic host translation shutoff by virus</keyword>
<keyword id="KW-1035">Host cytoplasm</keyword>
<keyword id="KW-1190">Host gene expression shutoff by virus</keyword>
<keyword id="KW-1043">Host membrane</keyword>
<keyword id="KW-1192">Host mRNA suppression by virus</keyword>
<keyword id="KW-0945">Host-virus interaction</keyword>
<keyword id="KW-0378">Hydrolase</keyword>
<keyword id="KW-1090">Inhibition of host innate immune response by virus</keyword>
<keyword id="KW-1114">Inhibition of host interferon signaling pathway by virus</keyword>
<keyword id="KW-1092">Inhibition of host IRF3 by virus</keyword>
<keyword id="KW-1095">Inhibition of host ISG15 by virus</keyword>
<keyword id="KW-1113">Inhibition of host RLR pathway by virus</keyword>
<keyword id="KW-0922">Interferon antiviral system evasion</keyword>
<keyword id="KW-0472">Membrane</keyword>
<keyword id="KW-0479">Metal-binding</keyword>
<keyword id="KW-0489">Methyltransferase</keyword>
<keyword id="KW-1127">Modulation of host ubiquitin pathway by viral deubiquitinase</keyword>
<keyword id="KW-1130">Modulation of host ubiquitin pathway by virus</keyword>
<keyword id="KW-0540">Nuclease</keyword>
<keyword id="KW-0645">Protease</keyword>
<keyword id="KW-1185">Reference proteome</keyword>
<keyword id="KW-0677">Repeat</keyword>
<keyword id="KW-0688">Ribosomal frameshifting</keyword>
<keyword id="KW-0694">RNA-binding</keyword>
<keyword id="KW-0788">Thiol protease</keyword>
<keyword id="KW-0808">Transferase</keyword>
<keyword id="KW-0812">Transmembrane</keyword>
<keyword id="KW-1133">Transmembrane helix</keyword>
<keyword id="KW-0833">Ubl conjugation pathway</keyword>
<keyword id="KW-0899">Viral immunoevasion</keyword>
<keyword id="KW-0862">Zinc</keyword>
<keyword id="KW-0863">Zinc-finger</keyword>
<evidence type="ECO:0000250" key="1"/>
<evidence type="ECO:0000250" key="2">
    <source>
        <dbReference type="UniProtKB" id="P0DTC1"/>
    </source>
</evidence>
<evidence type="ECO:0000255" key="3"/>
<evidence type="ECO:0000255" key="4">
    <source>
        <dbReference type="PROSITE-ProRule" id="PRU00214"/>
    </source>
</evidence>
<evidence type="ECO:0000255" key="5">
    <source>
        <dbReference type="PROSITE-ProRule" id="PRU00444"/>
    </source>
</evidence>
<evidence type="ECO:0000255" key="6">
    <source>
        <dbReference type="PROSITE-ProRule" id="PRU00490"/>
    </source>
</evidence>
<evidence type="ECO:0000255" key="7">
    <source>
        <dbReference type="PROSITE-ProRule" id="PRU00772"/>
    </source>
</evidence>
<evidence type="ECO:0000255" key="8">
    <source>
        <dbReference type="PROSITE-ProRule" id="PRU01289"/>
    </source>
</evidence>
<evidence type="ECO:0000255" key="9">
    <source>
        <dbReference type="PROSITE-ProRule" id="PRU01290"/>
    </source>
</evidence>
<evidence type="ECO:0000255" key="10">
    <source>
        <dbReference type="PROSITE-ProRule" id="PRU01291"/>
    </source>
</evidence>
<evidence type="ECO:0000255" key="11">
    <source>
        <dbReference type="PROSITE-ProRule" id="PRU01294"/>
    </source>
</evidence>
<evidence type="ECO:0000255" key="12">
    <source>
        <dbReference type="PROSITE-ProRule" id="PRU01295"/>
    </source>
</evidence>
<evidence type="ECO:0000255" key="13">
    <source>
        <dbReference type="PROSITE-ProRule" id="PRU01296"/>
    </source>
</evidence>
<evidence type="ECO:0000255" key="14">
    <source>
        <dbReference type="PROSITE-ProRule" id="PRU01297"/>
    </source>
</evidence>
<evidence type="ECO:0000255" key="15">
    <source>
        <dbReference type="PROSITE-ProRule" id="PRU01307"/>
    </source>
</evidence>
<evidence type="ECO:0000255" key="16">
    <source>
        <dbReference type="PROSITE-ProRule" id="PRU01308"/>
    </source>
</evidence>
<evidence type="ECO:0000255" key="17">
    <source>
        <dbReference type="PROSITE-ProRule" id="PRU01333"/>
    </source>
</evidence>
<evidence type="ECO:0000255" key="18">
    <source>
        <dbReference type="PROSITE-ProRule" id="PRU01334"/>
    </source>
</evidence>
<evidence type="ECO:0000255" key="19">
    <source>
        <dbReference type="PROSITE-ProRule" id="PRU01335"/>
    </source>
</evidence>
<evidence type="ECO:0000255" key="20">
    <source>
        <dbReference type="PROSITE-ProRule" id="PRU01336"/>
    </source>
</evidence>
<evidence type="ECO:0000255" key="21">
    <source>
        <dbReference type="PROSITE-ProRule" id="PRU01337"/>
    </source>
</evidence>
<evidence type="ECO:0000255" key="22">
    <source>
        <dbReference type="PROSITE-ProRule" id="PRU01338"/>
    </source>
</evidence>
<evidence type="ECO:0000305" key="23"/>
<evidence type="ECO:0007829" key="24">
    <source>
        <dbReference type="PDB" id="2YNA"/>
    </source>
</evidence>
<evidence type="ECO:0007829" key="25">
    <source>
        <dbReference type="PDB" id="2YNB"/>
    </source>
</evidence>
<gene>
    <name type="ORF">1a</name>
</gene>
<name>R1A_BCHK4</name>
<dbReference type="EC" id="3.4.19.12"/>
<dbReference type="EC" id="3.4.22.-"/>
<dbReference type="EC" id="3.4.22.69"/>
<dbReference type="EC" id="2.7.7.50"/>
<dbReference type="EMBL" id="EF065505">
    <property type="status" value="NOT_ANNOTATED_CDS"/>
    <property type="molecule type" value="Genomic_RNA"/>
</dbReference>
<dbReference type="PDB" id="2YNA">
    <property type="method" value="X-ray"/>
    <property type="resolution" value="1.50 A"/>
    <property type="chains" value="A/B=3292-3597"/>
</dbReference>
<dbReference type="PDB" id="2YNB">
    <property type="method" value="X-ray"/>
    <property type="resolution" value="1.96 A"/>
    <property type="chains" value="A/B=3292-3597"/>
</dbReference>
<dbReference type="PDBsum" id="2YNA"/>
<dbReference type="PDBsum" id="2YNB"/>
<dbReference type="SMR" id="P0C6T4"/>
<dbReference type="SABIO-RK" id="P0C6T4"/>
<dbReference type="EvolutionaryTrace" id="P0C6T4"/>
<dbReference type="Proteomes" id="UP000006574">
    <property type="component" value="Genome"/>
</dbReference>
<dbReference type="GO" id="GO:0033644">
    <property type="term" value="C:host cell membrane"/>
    <property type="evidence" value="ECO:0007669"/>
    <property type="project" value="UniProtKB-SubCell"/>
</dbReference>
<dbReference type="GO" id="GO:0044220">
    <property type="term" value="C:host cell perinuclear region of cytoplasm"/>
    <property type="evidence" value="ECO:0007669"/>
    <property type="project" value="UniProtKB-SubCell"/>
</dbReference>
<dbReference type="GO" id="GO:0016020">
    <property type="term" value="C:membrane"/>
    <property type="evidence" value="ECO:0007669"/>
    <property type="project" value="UniProtKB-KW"/>
</dbReference>
<dbReference type="GO" id="GO:0004843">
    <property type="term" value="F:cysteine-type deubiquitinase activity"/>
    <property type="evidence" value="ECO:0007669"/>
    <property type="project" value="UniProtKB-EC"/>
</dbReference>
<dbReference type="GO" id="GO:0004197">
    <property type="term" value="F:cysteine-type endopeptidase activity"/>
    <property type="evidence" value="ECO:0007669"/>
    <property type="project" value="InterPro"/>
</dbReference>
<dbReference type="GO" id="GO:0004519">
    <property type="term" value="F:endonuclease activity"/>
    <property type="evidence" value="ECO:0007669"/>
    <property type="project" value="UniProtKB-KW"/>
</dbReference>
<dbReference type="GO" id="GO:0002151">
    <property type="term" value="F:G-quadruplex RNA binding"/>
    <property type="evidence" value="ECO:0007669"/>
    <property type="project" value="InterPro"/>
</dbReference>
<dbReference type="GO" id="GO:0008168">
    <property type="term" value="F:methyltransferase activity"/>
    <property type="evidence" value="ECO:0007669"/>
    <property type="project" value="UniProtKB-KW"/>
</dbReference>
<dbReference type="GO" id="GO:0008242">
    <property type="term" value="F:omega peptidase activity"/>
    <property type="evidence" value="ECO:0007669"/>
    <property type="project" value="InterPro"/>
</dbReference>
<dbReference type="GO" id="GO:0003727">
    <property type="term" value="F:single-stranded RNA binding"/>
    <property type="evidence" value="ECO:0007669"/>
    <property type="project" value="InterPro"/>
</dbReference>
<dbReference type="GO" id="GO:0008270">
    <property type="term" value="F:zinc ion binding"/>
    <property type="evidence" value="ECO:0007669"/>
    <property type="project" value="UniProtKB-KW"/>
</dbReference>
<dbReference type="GO" id="GO:0032259">
    <property type="term" value="P:methylation"/>
    <property type="evidence" value="ECO:0007669"/>
    <property type="project" value="UniProtKB-KW"/>
</dbReference>
<dbReference type="GO" id="GO:0006508">
    <property type="term" value="P:proteolysis"/>
    <property type="evidence" value="ECO:0007669"/>
    <property type="project" value="UniProtKB-KW"/>
</dbReference>
<dbReference type="GO" id="GO:0010506">
    <property type="term" value="P:regulation of autophagy"/>
    <property type="evidence" value="ECO:0007669"/>
    <property type="project" value="InterPro"/>
</dbReference>
<dbReference type="GO" id="GO:0039520">
    <property type="term" value="P:symbiont-mediated activation of host autophagy"/>
    <property type="evidence" value="ECO:0007669"/>
    <property type="project" value="UniProtKB-KW"/>
</dbReference>
<dbReference type="GO" id="GO:0039595">
    <property type="term" value="P:symbiont-mediated degradation of host mRNA"/>
    <property type="evidence" value="ECO:0007669"/>
    <property type="project" value="UniProtKB-KW"/>
</dbReference>
<dbReference type="GO" id="GO:0039648">
    <property type="term" value="P:symbiont-mediated perturbation of host ubiquitin-like protein modification"/>
    <property type="evidence" value="ECO:0007669"/>
    <property type="project" value="UniProtKB-KW"/>
</dbReference>
<dbReference type="GO" id="GO:0039548">
    <property type="term" value="P:symbiont-mediated suppression of host cytoplasmic pattern recognition receptor signaling pathway via inhibition of IRF3 activity"/>
    <property type="evidence" value="ECO:0007669"/>
    <property type="project" value="UniProtKB-KW"/>
</dbReference>
<dbReference type="GO" id="GO:0039657">
    <property type="term" value="P:symbiont-mediated suppression of host gene expression"/>
    <property type="evidence" value="ECO:0007669"/>
    <property type="project" value="UniProtKB-KW"/>
</dbReference>
<dbReference type="GO" id="GO:0039579">
    <property type="term" value="P:symbiont-mediated suppression of host ISG15-protein conjugation"/>
    <property type="evidence" value="ECO:0007669"/>
    <property type="project" value="UniProtKB-KW"/>
</dbReference>
<dbReference type="GO" id="GO:0039502">
    <property type="term" value="P:symbiont-mediated suppression of host type I interferon-mediated signaling pathway"/>
    <property type="evidence" value="ECO:0007669"/>
    <property type="project" value="UniProtKB-KW"/>
</dbReference>
<dbReference type="GO" id="GO:0019079">
    <property type="term" value="P:viral genome replication"/>
    <property type="evidence" value="ECO:0007669"/>
    <property type="project" value="InterPro"/>
</dbReference>
<dbReference type="GO" id="GO:0019082">
    <property type="term" value="P:viral protein processing"/>
    <property type="evidence" value="ECO:0007669"/>
    <property type="project" value="InterPro"/>
</dbReference>
<dbReference type="GO" id="GO:0075523">
    <property type="term" value="P:viral translational frameshifting"/>
    <property type="evidence" value="ECO:0007669"/>
    <property type="project" value="UniProtKB-KW"/>
</dbReference>
<dbReference type="CDD" id="cd21901">
    <property type="entry name" value="alpha_betaCoV_Nsp10"/>
    <property type="match status" value="1"/>
</dbReference>
<dbReference type="CDD" id="cd21560">
    <property type="entry name" value="betaCoV-Nsp6"/>
    <property type="match status" value="1"/>
</dbReference>
<dbReference type="CDD" id="cd21666">
    <property type="entry name" value="betaCoV_Nsp5_Mpro"/>
    <property type="match status" value="1"/>
</dbReference>
<dbReference type="CDD" id="cd21827">
    <property type="entry name" value="betaCoV_Nsp7"/>
    <property type="match status" value="1"/>
</dbReference>
<dbReference type="CDD" id="cd21831">
    <property type="entry name" value="betaCoV_Nsp8"/>
    <property type="match status" value="1"/>
</dbReference>
<dbReference type="CDD" id="cd21898">
    <property type="entry name" value="betaCoV_Nsp9"/>
    <property type="match status" value="1"/>
</dbReference>
<dbReference type="CDD" id="cd21732">
    <property type="entry name" value="betaCoV_PLPro"/>
    <property type="match status" value="1"/>
</dbReference>
<dbReference type="CDD" id="cd21473">
    <property type="entry name" value="cv_Nsp4_TM"/>
    <property type="match status" value="1"/>
</dbReference>
<dbReference type="CDD" id="cd21563">
    <property type="entry name" value="Macro_cv_SUD-M_Nsp3-like"/>
    <property type="match status" value="1"/>
</dbReference>
<dbReference type="CDD" id="cd21557">
    <property type="entry name" value="Macro_X_Nsp3-like"/>
    <property type="match status" value="1"/>
</dbReference>
<dbReference type="CDD" id="cd21878">
    <property type="entry name" value="MERS-CoV-like_Nsp1"/>
    <property type="match status" value="1"/>
</dbReference>
<dbReference type="CDD" id="cd21815">
    <property type="entry name" value="MERS-CoV-like_Nsp3_betaSM"/>
    <property type="match status" value="1"/>
</dbReference>
<dbReference type="CDD" id="cd21823">
    <property type="entry name" value="MERS-CoV-like_Nsp3_NAB"/>
    <property type="match status" value="1"/>
</dbReference>
<dbReference type="CDD" id="cd21523">
    <property type="entry name" value="SUD_C_MERS-CoV_Nsp3"/>
    <property type="match status" value="1"/>
</dbReference>
<dbReference type="CDD" id="cd21716">
    <property type="entry name" value="TM_Y_MERS-CoV-like_Nsp3_C"/>
    <property type="match status" value="1"/>
</dbReference>
<dbReference type="CDD" id="cd21467">
    <property type="entry name" value="Ubl1_cv_Nsp3_N-like"/>
    <property type="match status" value="1"/>
</dbReference>
<dbReference type="FunFam" id="1.10.150.420:FF:000001">
    <property type="entry name" value="Replicase polyprotein"/>
    <property type="match status" value="1"/>
</dbReference>
<dbReference type="FunFam" id="2.40.10.10:FF:000045">
    <property type="entry name" value="Replicase polyprotein 1a"/>
    <property type="match status" value="1"/>
</dbReference>
<dbReference type="Gene3D" id="1.10.8.1190">
    <property type="match status" value="1"/>
</dbReference>
<dbReference type="Gene3D" id="2.60.120.1680">
    <property type="match status" value="1"/>
</dbReference>
<dbReference type="Gene3D" id="3.10.20.350">
    <property type="match status" value="1"/>
</dbReference>
<dbReference type="Gene3D" id="3.10.20.540">
    <property type="match status" value="1"/>
</dbReference>
<dbReference type="Gene3D" id="6.10.140.2090">
    <property type="match status" value="1"/>
</dbReference>
<dbReference type="Gene3D" id="1.10.150.420">
    <property type="entry name" value="Coronavirus nonstructural protein 4 C-terminus"/>
    <property type="match status" value="1"/>
</dbReference>
<dbReference type="Gene3D" id="3.40.220.10">
    <property type="entry name" value="Leucine Aminopeptidase, subunit E, domain 1"/>
    <property type="match status" value="1"/>
</dbReference>
<dbReference type="Gene3D" id="1.10.1840.10">
    <property type="entry name" value="main proteinase (3clpro) structure, domain 3"/>
    <property type="match status" value="1"/>
</dbReference>
<dbReference type="Gene3D" id="3.40.220.20">
    <property type="entry name" value="Nsp3, SUD-M subdomain"/>
    <property type="match status" value="1"/>
</dbReference>
<dbReference type="Gene3D" id="1.10.8.370">
    <property type="entry name" value="nsp7 replicase"/>
    <property type="match status" value="1"/>
</dbReference>
<dbReference type="Gene3D" id="3.30.70.3540">
    <property type="entry name" value="Nsp8 replicase, head domain"/>
    <property type="match status" value="1"/>
</dbReference>
<dbReference type="Gene3D" id="2.40.10.250">
    <property type="entry name" value="Replicase NSP9"/>
    <property type="match status" value="1"/>
</dbReference>
<dbReference type="Gene3D" id="3.40.50.11020">
    <property type="entry name" value="Replicase polyprotein, nucleic acid-binding domain"/>
    <property type="match status" value="1"/>
</dbReference>
<dbReference type="Gene3D" id="2.40.10.10">
    <property type="entry name" value="Trypsin-like serine proteases"/>
    <property type="match status" value="2"/>
</dbReference>
<dbReference type="InterPro" id="IPR046443">
    <property type="entry name" value="a/bCoV_NSP1_glob"/>
</dbReference>
<dbReference type="InterPro" id="IPR046442">
    <property type="entry name" value="bCoV_NSP1_C"/>
</dbReference>
<dbReference type="InterPro" id="IPR043613">
    <property type="entry name" value="CoV_NSP2_C"/>
</dbReference>
<dbReference type="InterPro" id="IPR047573">
    <property type="entry name" value="CoV_NSP2_M"/>
</dbReference>
<dbReference type="InterPro" id="IPR049894">
    <property type="entry name" value="COV_NSP3_3ECTO"/>
</dbReference>
<dbReference type="InterPro" id="IPR043611">
    <property type="entry name" value="CoV_NSP3_C"/>
</dbReference>
<dbReference type="InterPro" id="IPR047566">
    <property type="entry name" value="CoV_NSP3_Y"/>
</dbReference>
<dbReference type="InterPro" id="IPR032505">
    <property type="entry name" value="CoV_NSP4_C"/>
</dbReference>
<dbReference type="InterPro" id="IPR043612">
    <property type="entry name" value="CoV_NSP4_N"/>
</dbReference>
<dbReference type="InterPro" id="IPR022733">
    <property type="entry name" value="DPUP_SUD_C_bCoV"/>
</dbReference>
<dbReference type="InterPro" id="IPR002589">
    <property type="entry name" value="Macro_dom"/>
</dbReference>
<dbReference type="InterPro" id="IPR043472">
    <property type="entry name" value="Macro_dom-like"/>
</dbReference>
<dbReference type="InterPro" id="IPR044371">
    <property type="entry name" value="Macro_X_NSP3-like"/>
</dbReference>
<dbReference type="InterPro" id="IPR036333">
    <property type="entry name" value="NSP10_sf_CoV"/>
</dbReference>
<dbReference type="InterPro" id="IPR021590">
    <property type="entry name" value="NSP1_glob_bCoV"/>
</dbReference>
<dbReference type="InterPro" id="IPR043615">
    <property type="entry name" value="NSP2_N_CoV"/>
</dbReference>
<dbReference type="InterPro" id="IPR024375">
    <property type="entry name" value="NSP3_bCoV"/>
</dbReference>
<dbReference type="InterPro" id="IPR047567">
    <property type="entry name" value="NSP3_G2M_bCoV"/>
</dbReference>
<dbReference type="InterPro" id="IPR032592">
    <property type="entry name" value="NSP3_NAB_bCoV"/>
</dbReference>
<dbReference type="InterPro" id="IPR042570">
    <property type="entry name" value="NSP3_NAB_bCoV_sf"/>
</dbReference>
<dbReference type="InterPro" id="IPR038400">
    <property type="entry name" value="NSP3_SUD-M_sf_bCoV"/>
</dbReference>
<dbReference type="InterPro" id="IPR044382">
    <property type="entry name" value="NSP3_SUD_C_MERS-CoV"/>
</dbReference>
<dbReference type="InterPro" id="IPR044357">
    <property type="entry name" value="NSP3_Ubl1_dom_CoV"/>
</dbReference>
<dbReference type="InterPro" id="IPR044353">
    <property type="entry name" value="Nsp3_Ubl2_dom_CoV"/>
</dbReference>
<dbReference type="InterPro" id="IPR038083">
    <property type="entry name" value="NSP3A-like"/>
</dbReference>
<dbReference type="InterPro" id="IPR038123">
    <property type="entry name" value="NSP4_C_sf_CoV"/>
</dbReference>
<dbReference type="InterPro" id="IPR044367">
    <property type="entry name" value="NSP6_betaCoV"/>
</dbReference>
<dbReference type="InterPro" id="IPR043610">
    <property type="entry name" value="NSP6_CoV"/>
</dbReference>
<dbReference type="InterPro" id="IPR014828">
    <property type="entry name" value="NSP7_CoV"/>
</dbReference>
<dbReference type="InterPro" id="IPR037204">
    <property type="entry name" value="NSP7_sf_CoV"/>
</dbReference>
<dbReference type="InterPro" id="IPR014829">
    <property type="entry name" value="NSP8_CoV"/>
</dbReference>
<dbReference type="InterPro" id="IPR037230">
    <property type="entry name" value="NSP8_sf_CoV"/>
</dbReference>
<dbReference type="InterPro" id="IPR014822">
    <property type="entry name" value="NSP9_CoV"/>
</dbReference>
<dbReference type="InterPro" id="IPR036499">
    <property type="entry name" value="NSP9_sf_CoV"/>
</dbReference>
<dbReference type="InterPro" id="IPR013016">
    <property type="entry name" value="Peptidase_C16_CoV"/>
</dbReference>
<dbReference type="InterPro" id="IPR008740">
    <property type="entry name" value="Peptidase_C30_CoV"/>
</dbReference>
<dbReference type="InterPro" id="IPR043477">
    <property type="entry name" value="Peptidase_C30_dom3_CoV"/>
</dbReference>
<dbReference type="InterPro" id="IPR009003">
    <property type="entry name" value="Peptidase_S1_PA"/>
</dbReference>
<dbReference type="InterPro" id="IPR043504">
    <property type="entry name" value="Peptidase_S1_PA_chymotrypsin"/>
</dbReference>
<dbReference type="InterPro" id="IPR043177">
    <property type="entry name" value="PLpro_N_sf_CoV"/>
</dbReference>
<dbReference type="InterPro" id="IPR043503">
    <property type="entry name" value="PLpro_palm_finger_dom_CoV"/>
</dbReference>
<dbReference type="InterPro" id="IPR043178">
    <property type="entry name" value="PLpro_thumb_sf_CoV"/>
</dbReference>
<dbReference type="InterPro" id="IPR018995">
    <property type="entry name" value="RNA_synth_NSP10_CoV"/>
</dbReference>
<dbReference type="Pfam" id="PF16251">
    <property type="entry name" value="bCoV_NAB"/>
    <property type="match status" value="1"/>
</dbReference>
<dbReference type="Pfam" id="PF11501">
    <property type="entry name" value="bCoV_NSP1"/>
    <property type="match status" value="1"/>
</dbReference>
<dbReference type="Pfam" id="PF11633">
    <property type="entry name" value="bCoV_SUD_M"/>
    <property type="match status" value="1"/>
</dbReference>
<dbReference type="Pfam" id="PF09401">
    <property type="entry name" value="CoV_NSP10"/>
    <property type="match status" value="1"/>
</dbReference>
<dbReference type="Pfam" id="PF19212">
    <property type="entry name" value="CoV_NSP2_C"/>
    <property type="match status" value="1"/>
</dbReference>
<dbReference type="Pfam" id="PF19211">
    <property type="entry name" value="CoV_NSP2_N"/>
    <property type="match status" value="1"/>
</dbReference>
<dbReference type="Pfam" id="PF19218">
    <property type="entry name" value="CoV_NSP3_C"/>
    <property type="match status" value="1"/>
</dbReference>
<dbReference type="Pfam" id="PF16348">
    <property type="entry name" value="CoV_NSP4_C"/>
    <property type="match status" value="1"/>
</dbReference>
<dbReference type="Pfam" id="PF19217">
    <property type="entry name" value="CoV_NSP4_N"/>
    <property type="match status" value="1"/>
</dbReference>
<dbReference type="Pfam" id="PF19213">
    <property type="entry name" value="CoV_NSP6"/>
    <property type="match status" value="1"/>
</dbReference>
<dbReference type="Pfam" id="PF08716">
    <property type="entry name" value="CoV_NSP7"/>
    <property type="match status" value="1"/>
</dbReference>
<dbReference type="Pfam" id="PF08717">
    <property type="entry name" value="CoV_NSP8"/>
    <property type="match status" value="1"/>
</dbReference>
<dbReference type="Pfam" id="PF08710">
    <property type="entry name" value="CoV_NSP9"/>
    <property type="match status" value="1"/>
</dbReference>
<dbReference type="Pfam" id="PF08715">
    <property type="entry name" value="CoV_peptidase"/>
    <property type="match status" value="1"/>
</dbReference>
<dbReference type="Pfam" id="PF01661">
    <property type="entry name" value="Macro"/>
    <property type="match status" value="1"/>
</dbReference>
<dbReference type="Pfam" id="PF05409">
    <property type="entry name" value="Peptidase_C30"/>
    <property type="match status" value="1"/>
</dbReference>
<dbReference type="SMART" id="SM00506">
    <property type="entry name" value="A1pp"/>
    <property type="match status" value="1"/>
</dbReference>
<dbReference type="SUPFAM" id="SSF144246">
    <property type="entry name" value="Coronavirus NSP10-like"/>
    <property type="match status" value="1"/>
</dbReference>
<dbReference type="SUPFAM" id="SSF140367">
    <property type="entry name" value="Coronavirus NSP7-like"/>
    <property type="match status" value="1"/>
</dbReference>
<dbReference type="SUPFAM" id="SSF143076">
    <property type="entry name" value="Coronavirus NSP8-like"/>
    <property type="match status" value="1"/>
</dbReference>
<dbReference type="SUPFAM" id="SSF52949">
    <property type="entry name" value="Macro domain-like"/>
    <property type="match status" value="1"/>
</dbReference>
<dbReference type="SUPFAM" id="SSF159936">
    <property type="entry name" value="NSP3A-like"/>
    <property type="match status" value="1"/>
</dbReference>
<dbReference type="SUPFAM" id="SSF101816">
    <property type="entry name" value="Replicase NSP9"/>
    <property type="match status" value="1"/>
</dbReference>
<dbReference type="SUPFAM" id="SSF50494">
    <property type="entry name" value="Trypsin-like serine proteases"/>
    <property type="match status" value="1"/>
</dbReference>
<dbReference type="PROSITE" id="PS51963">
    <property type="entry name" value="BCOV_NSP1_C"/>
    <property type="match status" value="1"/>
</dbReference>
<dbReference type="PROSITE" id="PS51942">
    <property type="entry name" value="BCOV_NSP3C_C"/>
    <property type="match status" value="1"/>
</dbReference>
<dbReference type="PROSITE" id="PS51941">
    <property type="entry name" value="BCOV_NSP3C_M"/>
    <property type="match status" value="1"/>
</dbReference>
<dbReference type="PROSITE" id="PS51994">
    <property type="entry name" value="BCOV_NSP3E_G2M"/>
    <property type="match status" value="1"/>
</dbReference>
<dbReference type="PROSITE" id="PS51945">
    <property type="entry name" value="BCOV_NSP3E_NAB"/>
    <property type="match status" value="1"/>
</dbReference>
<dbReference type="PROSITE" id="PS51993">
    <property type="entry name" value="COV_3ECTO"/>
    <property type="match status" value="1"/>
</dbReference>
<dbReference type="PROSITE" id="PS51952">
    <property type="entry name" value="COV_EXON_MTASE_COACT"/>
    <property type="match status" value="1"/>
</dbReference>
<dbReference type="PROSITE" id="PS51962">
    <property type="entry name" value="COV_NSP1"/>
    <property type="match status" value="1"/>
</dbReference>
<dbReference type="PROSITE" id="PS51991">
    <property type="entry name" value="COV_NSP2_C"/>
    <property type="match status" value="1"/>
</dbReference>
<dbReference type="PROSITE" id="PS51990">
    <property type="entry name" value="COV_NSP2_M"/>
    <property type="match status" value="1"/>
</dbReference>
<dbReference type="PROSITE" id="PS51989">
    <property type="entry name" value="COV_NSP2_N"/>
    <property type="match status" value="1"/>
</dbReference>
<dbReference type="PROSITE" id="PS51992">
    <property type="entry name" value="COV_NSP3_Y"/>
    <property type="match status" value="1"/>
</dbReference>
<dbReference type="PROSITE" id="PS51943">
    <property type="entry name" value="COV_NSP3A_UBL"/>
    <property type="match status" value="1"/>
</dbReference>
<dbReference type="PROSITE" id="PS51944">
    <property type="entry name" value="COV_NSP3D_UBL"/>
    <property type="match status" value="1"/>
</dbReference>
<dbReference type="PROSITE" id="PS51946">
    <property type="entry name" value="COV_NSP4C"/>
    <property type="match status" value="1"/>
</dbReference>
<dbReference type="PROSITE" id="PS51949">
    <property type="entry name" value="COV_NSP7"/>
    <property type="match status" value="1"/>
</dbReference>
<dbReference type="PROSITE" id="PS51950">
    <property type="entry name" value="COV_NSP8"/>
    <property type="match status" value="1"/>
</dbReference>
<dbReference type="PROSITE" id="PS51951">
    <property type="entry name" value="COV_NSP9_SSRNA_BD"/>
    <property type="match status" value="1"/>
</dbReference>
<dbReference type="PROSITE" id="PS51442">
    <property type="entry name" value="M_PRO"/>
    <property type="match status" value="1"/>
</dbReference>
<dbReference type="PROSITE" id="PS51154">
    <property type="entry name" value="MACRO"/>
    <property type="match status" value="1"/>
</dbReference>
<dbReference type="PROSITE" id="PS51124">
    <property type="entry name" value="PEPTIDASE_C16"/>
    <property type="match status" value="1"/>
</dbReference>
<sequence length="4434" mass="491823">MLSKASVTTQGARGKYRAELYNEKRSDHVACTVPLCDTDDMACKLTPWFEDGETAFNQVSSILKEKGKILFVPMHMQRAMKFLPGPRVYLVERLTGGMLSKHFLVNQLAYKDQVGAAMMRTTLNAKPLGMFFPYDSSLETGEYTFLLRKNGLGGQLFRERPWDRKETPYVEILDDLEADPTGKYSQNLLKKLIGGDCIPIDQYMCGKNGKPIADYAKIVAKEGLTTLADIEVDVKSRMDSDRFIVLNKKLYRVVWNVTRRNVPYPKQTAFTIVSVVQCDDKDSVPEHTFTIGSQILMVSPLKATNNKNFNLKQRLLYTFYGKDAVQQPGYIYHSAYVDCNACGRGTWCTGNAIQGFACDCGANYSANDVDLQSSGLVPRNALFLANCPCANNGACSHSAAQVYNILDGKACVEVGGKSFTLTFGGVVYAYMGCCDGTMYFVPRAKSCVSRIGDAIFTGCTGTWDKVVETANLFLEKAQRSLNFCQQFALTEVVLAILSGTTSTFEELRDLCHNASYEKVRDHLVNHGFVVTIGDYIRDAINIGANGVCNATINAPFIAFTGLGESFKKVSAIPWKICSNLKSALDYYSSNIMFRVFPYDIPCDVSNFVELLLDCGKLTVATSYFVLRYLDEKFDTVLGTVSSACQTALSSFLNACVAASRATAGFINDMFKLFKVLMHKLYVYTSCGYVAVAEHSSKIVQQVLDIMSKAMKLLHTNVSWAGTKLSAIIYEGREALLFNSGTYFCLSTKAKTLQGQMNLVLPGDYNKKTLGILDPVPNADTIDVNANSTVVDVVHGQLEPTNEHGPSMIVGNYVLVSDKLFVRTEDEEFYPLCTNGKVVSTLFRLKGGMPSKKVTFGDVNTVEVTAYRSVSITYDIHPVLDALLSSSKLATFTVEKDLLVEDFVDVIKDEVLTLLTPLLRGYDIDGFDVEDFIDVPCYVYNQDGDCAWSSNMTFSINPVEDVEEVEEFIEDDYLSDELPIADDEEAWARAVEEVMPLDDILVAEIELEEDPPLETALESVEAEVVETAEAQEPSVESIDSTPSTSTVVGENDLSVKPMSRVAETDDVLELETAVVGGPVSDVTAIVTNDIVSVEQAQQCGVSSLPIQDEASENQVHQVSDLQGNELLCSETKVEIVQPRQDLKPRRSRKSKVDLSKYKHTVINNSVTLVLGDAIQIASLLPKCILVNAANRHLKHGGGIAGVINKASGGDVQEESDEYISNNGPLHVGDSVLLKGHGLADAILHVVGPDARNNEDAALLKRCYKAFNKHTIVVTPLISAGIFSVDPKVSFEYLLANVTTTTYVVVNNEDIYNTLATPSKPDGLVYSFEGWRGTVRTAKNYGFTCFICTEYSANVKFLRTKGVDTTKKIQTVDGVSYYLYSARDALTDVIAAANGCSGICAMPFGYVTHGLDLAQSGNYVRQVKVPYVCLLASKEQIPIMNSDVAIQTPETAFINNVTSNGGYHSWHLVSGDLIVKDVCYKKLLHWSGQTICYADNKFYVVKNDVALPFSDLEACRAYLTSRAAQQVNIEVLVTIDGVNFRTVILNDTTTFRKQLGATFYKGVDISDAFPTVKMGGESLFVADNLSESEKVVLKEYYGTSDVTFLQRYYSLQPLVQQWKFVVHDGVKSLKLSNYNCYINATIMMIDMLHDIKFVVPALQNAYLRYKGGDPYDFLALIMAYGDCTFDNPDDEAKLLHTLLAKAELTVSAKMVWREWCTVCGIRDIEYTGMRACVYAGVNSMEELQSVFNETCVCGSVKHRQLVEHSAPWLLVSGLNEVKVSTSTDPIYRAFNVFQGVETSVGHYVHIRVKDGLFYKYDSGSLTKTSDMKCKMTSVWYPTVRYTADCNVVVYDLDGVTKVEVNPDLSNYYMKDGKYYTSKPTIKYSPATILPGSVYSNSCLVGVDGTPGSDTISKFFNDLLGFDETKPISKKLTYSLLPNEDGDVLLSEFSNYNPVYKKGVMLKGKPILWVNNGVCDSALNKPNRASLRQLYDVAPIVLDNKYTVLQDNTSQLVEHNVPVVDDVPITTRKLIEVKCKGLNKPFVKGNFSFVNDPNGVTVVDTLGLTELRALYVDINTRYIVLRDNNWSSLFKLHTVESGDLQIVAAGGSVTRRARVLLGASSLFASFAKITVTATTAACKTAGRGFCKFVVNYGVLQNMFVFLKMLFFLPFNYLWPKKQPTVDIGVSGLRTAGIVTTNIVKQCGTAAYYMLLGKFKRVDWKATLRLFLLLCTTILLLSSIYHLVLFNQVLSSDVMLEDATGILAIYKEVRSYLGIRTLCDGLVVEYRNTSFDVMEFCSNRSVLCQWCLIGQDSLTRYSALQMLQTHITSYVLNIDWIWFALEFFLAYVLYTSSFNVLLLVVTAQYFFAYTSAFVNWRAYNYIVSGLFFLVTHIPLHGLVRVYNFLACLWFLRKFYSHVINGCKDTACLLCYKRNRLTRVEASTIVCGTKRTFYIAANGGTSYCCKHNWNCVECDTAGVGNTFICTEVANDLTTTLRRLIKPTDQSHYYVDSVVVKDAVVELHYNRDGSSCYERYPLCYFTNLEKLKFKEVCKTPTGIPEHNFLIYDTNDRGQENLARSACVYYSQVLCKPMLLVDVNLVTTVGDSREIAIKMLDSFINSFISLFSVSRDKLEKLINTARDCVRRGDDFQNVLKTFTDAARGHAGVESDVETTMVVDALQYAHKNDIQLTTECYNNYVPGYIKPDSINTLDLGCLIDLKAASVNQTSMRNANGACVWNSGDYMKLSDSFKRQIRIACRKCNIPFRLTTSKLRAADNILSVKFSATKIVGGAPSWLLRVRDLTVKGYCILTLFVFTVAVLSWFCLPSYSIATVNFNDDRILTYKVIENGIVRDIAPNDVCFANKYGHFSKWFNENHGGVYRNSMDCPITIAVIAGVAGARVANVPANLAWVGKQIVLFVSRVFANTNVCFTPINEIPYDTFSDSGCVLSSECTLFRDAEGNLNPFCYDPTVLPGASSYADMKPHVRYDMYDSDMYIKFPEVIVESTLRITKTLATQYCRFGSCEESAAGVCISTNGSWALYNQNYSTRPGIYCGDDYFDIVRRLAISLFQPVTYFQLSTSLAMGLVLCVFLTAAFYYINKVKRALADYTQCAVVAVVAALLNSLCLCFIVANPLLVAPYTAMYYYATFYLTGEPAFIMHISWYVMFGAVVPIWMLASYTVGVMLRHLFWVLAYFSKKHVDVFTDGKLNCSFQDAASNIFVIGKDTYVALRNAITQDSFVRYLSLFNKYKYYSGAMDTASYREACAAHLCKALQTYSETGSDILYQPPNCSVTSSVLQSGLVKMSAPSGAVENCIVQVTCGSMTLNGLWLDNTVWCPRHIMCPADQLTDPNYDALLISKTNHSFIVQKHIGAQANLRVVAHSMVGVLLKLTVDVANPSTPAYTFSTVKPGASFSVLACYNGKPTGVFTVNLRHNSTIKGSFLCGSCGSVGYTENGGVINFVYMHQMELSNGTHTGSSFDGVMYGAFEDKQTHQLQLTDKYCTINVVAWLYAAVLNGCKWFVKPTRVGIVTYNEWALSNQFTEFVGTQSIDMLAHRTGVSVEQMLAAIQSLHAGFQGKTILGQSTLEDEFTPDDVNMQVMGVVMQSGVKRISYGFIHWLISTFVLAYVSVMQLTKFTMWTYLFETIPTQMTPLLLGFMACVMFTVKHKHTFMSLFLLPVALCLTYANIVYEPQTLISSTLIAVANWLTPTSVYMRTTHFDFGLYISLSFVLAIIVRRLYRPSMSNLALALCSGVMWFYTYVIGDHSSPITYLMFITTLTSDYTITVFATVNLAKFISGLVFFYAPHLGFILPEVKLVLLIYLGLGYMCTMYFGVFSLLNLKLRVPLGVYDYSVSTQEFRFLTGNGLHAPRNSWEALILNFKLLGIGGTPCIKVATVQSKLTDLKCTSVVLLTVLQQLHLESNSKAWSYCVKLHNEILAAVDPTEAFERFVCLFATLMSFSANVDLDALANDLFENSSVLQATLTEFSHLATYAELETAQSSYQKALNSGDASPQVLKALQKAVNVAKNAYEKDKAVARKLERMAEQAMTSMYKQARAEDKKAKIVSAMQTMLFGMIKKLDNDVLNGVIANARNGCVPLSIVPLCASNKLRVVIPDISVWNKVVNWPSVSYAGSLWDITVINNVDNEVVKPTDVVETNESLTWPLVIECSRSSSSAVKLQNNEIHPKGLKTMVITAGVDQVNCNSSAVAYYEPVQGHRMVMGLLSENAHLKWAKVEGKDGFINIELQPPCKFLIAGPKGPEIRYLYFVKNLNNLHRGQLLGHIAATVRLQAGANTEFASNSTVLTLVAFAVDPAKAYLDYVGSGGTPLSNYVKMLAPKTGTGVAISVKPEATADQETYGGASVCLYCRAHIEHPDVSGVCKYKTRFVQIPAHVRDPVGFLLKNVPCNVCQYWVGYGCNCDALRNNTVPQSKDTNFLNESGVLV</sequence>
<feature type="chain" id="PRO_0000338086" description="Replicase polyprotein 1a">
    <location>
        <begin position="1"/>
        <end position="4434"/>
    </location>
</feature>
<feature type="chain" id="PRO_0000338087" description="Non-structural protein 1" evidence="3">
    <location>
        <begin position="1"/>
        <end position="195"/>
    </location>
</feature>
<feature type="chain" id="PRO_0000338088" description="Non-structural protein 2" evidence="3">
    <location>
        <begin position="196"/>
        <end position="847"/>
    </location>
</feature>
<feature type="chain" id="PRO_0000338089" description="Non-structural protein 3" evidence="3">
    <location>
        <begin position="848"/>
        <end position="2784"/>
    </location>
</feature>
<feature type="chain" id="PRO_0000338090" description="Non-structural protein 4" evidence="3">
    <location>
        <begin position="2785"/>
        <end position="3291"/>
    </location>
</feature>
<feature type="chain" id="PRO_0000338091" description="3C-like proteinase nsp5" evidence="3">
    <location>
        <begin position="3292"/>
        <end position="3597"/>
    </location>
</feature>
<feature type="chain" id="PRO_0000338092" description="Non-structural protein 6" evidence="3">
    <location>
        <begin position="3598"/>
        <end position="3889"/>
    </location>
</feature>
<feature type="chain" id="PRO_0000338093" description="Non-structural protein 7" evidence="3">
    <location>
        <begin position="3890"/>
        <end position="3972"/>
    </location>
</feature>
<feature type="chain" id="PRO_0000338094" description="Non-structural protein 8" evidence="3">
    <location>
        <begin position="3973"/>
        <end position="4171"/>
    </location>
</feature>
<feature type="chain" id="PRO_0000338095" description="RNA-capping enzyme subunit nsp9" evidence="3">
    <location>
        <begin position="4172"/>
        <end position="4281"/>
    </location>
</feature>
<feature type="chain" id="PRO_0000338097" description="Non-structural protein 11" evidence="3">
    <location>
        <begin position="4281"/>
        <end position="4434"/>
    </location>
</feature>
<feature type="chain" id="PRO_0000338096" description="Non-structural protein 10" evidence="3">
    <location>
        <begin position="4282"/>
        <end position="4420"/>
    </location>
</feature>
<feature type="transmembrane region" description="Helical" evidence="3">
    <location>
        <begin position="2145"/>
        <end position="2165"/>
    </location>
</feature>
<feature type="transmembrane region" description="Helical" evidence="3">
    <location>
        <begin position="2222"/>
        <end position="2242"/>
    </location>
</feature>
<feature type="transmembrane region" description="Helical" evidence="3">
    <location>
        <begin position="2326"/>
        <end position="2346"/>
    </location>
</feature>
<feature type="transmembrane region" description="Helical" evidence="3">
    <location>
        <begin position="2350"/>
        <end position="2370"/>
    </location>
</feature>
<feature type="transmembrane region" description="Helical" evidence="3">
    <location>
        <begin position="2375"/>
        <end position="2395"/>
    </location>
</feature>
<feature type="transmembrane region" description="Helical" evidence="3">
    <location>
        <begin position="2800"/>
        <end position="2820"/>
    </location>
</feature>
<feature type="transmembrane region" description="Helical" evidence="3">
    <location>
        <begin position="3072"/>
        <end position="3092"/>
    </location>
</feature>
<feature type="transmembrane region" description="Helical" evidence="3">
    <location>
        <begin position="3105"/>
        <end position="3125"/>
    </location>
</feature>
<feature type="transmembrane region" description="Helical" evidence="3">
    <location>
        <begin position="3149"/>
        <end position="3169"/>
    </location>
</feature>
<feature type="transmembrane region" description="Helical" evidence="3">
    <location>
        <begin position="3603"/>
        <end position="3623"/>
    </location>
</feature>
<feature type="transmembrane region" description="Helical" evidence="3">
    <location>
        <begin position="3637"/>
        <end position="3657"/>
    </location>
</feature>
<feature type="transmembrane region" description="Helical" evidence="3">
    <location>
        <begin position="3662"/>
        <end position="3682"/>
    </location>
</feature>
<feature type="transmembrane region" description="Helical" evidence="3">
    <location>
        <begin position="3707"/>
        <end position="3727"/>
    </location>
</feature>
<feature type="transmembrane region" description="Helical" evidence="3">
    <location>
        <begin position="3735"/>
        <end position="3755"/>
    </location>
</feature>
<feature type="transmembrane region" description="Helical" evidence="3">
    <location>
        <begin position="3784"/>
        <end position="3804"/>
    </location>
</feature>
<feature type="transmembrane region" description="Helical" evidence="3">
    <location>
        <begin position="3808"/>
        <end position="3828"/>
    </location>
</feature>
<feature type="domain" description="CoV Nsp1 globular" evidence="15">
    <location>
        <begin position="25"/>
        <end position="151"/>
    </location>
</feature>
<feature type="domain" description="BetaCoV Nsp1 C-terminal" evidence="16">
    <location>
        <begin position="167"/>
        <end position="195"/>
    </location>
</feature>
<feature type="domain" description="CoV Nsp2 N-terminal" evidence="17">
    <location>
        <begin position="197"/>
        <end position="472"/>
    </location>
</feature>
<feature type="domain" description="CoV Nsp2 middle" evidence="18">
    <location>
        <begin position="478"/>
        <end position="712"/>
    </location>
</feature>
<feature type="domain" description="CoV Nsp2 C-terminal" evidence="19">
    <location>
        <begin position="714"/>
        <end position="847"/>
    </location>
</feature>
<feature type="domain" description="Ubiquitin-like 1" evidence="4">
    <location>
        <begin position="851"/>
        <end position="960"/>
    </location>
</feature>
<feature type="domain" description="Macro 1" evidence="6">
    <location>
        <begin position="1152"/>
        <end position="1321"/>
    </location>
</feature>
<feature type="domain" description="Macro 2" evidence="6">
    <location>
        <begin position="1322"/>
        <end position="1446"/>
    </location>
</feature>
<feature type="domain" description="DPUP" evidence="8">
    <location>
        <begin position="1446"/>
        <end position="1519"/>
    </location>
</feature>
<feature type="domain" description="Ubiquitin-like 2" evidence="4">
    <location>
        <begin position="1524"/>
        <end position="1579"/>
    </location>
</feature>
<feature type="domain" description="Peptidase C16" evidence="5">
    <location>
        <begin position="1593"/>
        <end position="1864"/>
    </location>
</feature>
<feature type="domain" description="Nucleic acid-binding" evidence="9">
    <location>
        <begin position="1878"/>
        <end position="1995"/>
    </location>
</feature>
<feature type="domain" description="G2M" evidence="22">
    <location>
        <begin position="2012"/>
        <end position="2133"/>
    </location>
</feature>
<feature type="domain" description="3Ecto" evidence="21">
    <location>
        <begin position="2259"/>
        <end position="2325"/>
    </location>
</feature>
<feature type="domain" description="CoV Nsp3 Y" evidence="20">
    <location>
        <begin position="2409"/>
        <end position="2782"/>
    </location>
</feature>
<feature type="domain" description="Nsp4C" evidence="10">
    <location>
        <begin position="3195"/>
        <end position="3291"/>
    </location>
</feature>
<feature type="domain" description="Peptidase C30" evidence="7">
    <location>
        <begin position="3292"/>
        <end position="3597"/>
    </location>
</feature>
<feature type="domain" description="RdRp Nsp7 cofactor" evidence="11">
    <location>
        <begin position="3890"/>
        <end position="3972"/>
    </location>
</feature>
<feature type="domain" description="RdRp Nsp8 cofactor" evidence="12">
    <location>
        <begin position="3973"/>
        <end position="4171"/>
    </location>
</feature>
<feature type="domain" description="Nsp9 ssRNA-binding" evidence="13">
    <location>
        <begin position="4172"/>
        <end position="4281"/>
    </location>
</feature>
<feature type="domain" description="ExoN/MTase coactivator" evidence="14">
    <location>
        <begin position="4282"/>
        <end position="4420"/>
    </location>
</feature>
<feature type="zinc finger region" description="C4-type" evidence="5">
    <location>
        <begin position="1714"/>
        <end position="1751"/>
    </location>
</feature>
<feature type="zinc finger region" evidence="1">
    <location>
        <begin position="4355"/>
        <end position="4371"/>
    </location>
</feature>
<feature type="zinc finger region" evidence="1">
    <location>
        <begin position="4397"/>
        <end position="4410"/>
    </location>
</feature>
<feature type="region of interest" description="C4" evidence="17">
    <location>
        <begin position="339"/>
        <end position="360"/>
    </location>
</feature>
<feature type="region of interest" description="HD1" evidence="1">
    <location>
        <begin position="2112"/>
        <end position="2395"/>
    </location>
</feature>
<feature type="region of interest" description="Y1" evidence="20">
    <location>
        <begin position="2409"/>
        <end position="2499"/>
    </location>
</feature>
<feature type="region of interest" description="ZF1" evidence="20">
    <location>
        <begin position="2413"/>
        <end position="2426"/>
    </location>
</feature>
<feature type="region of interest" description="ZF2" evidence="20">
    <location>
        <begin position="2459"/>
        <end position="2469"/>
    </location>
</feature>
<feature type="region of interest" description="CoV-Y" evidence="20">
    <location>
        <begin position="2500"/>
        <end position="2782"/>
    </location>
</feature>
<feature type="region of interest" description="Y2" evidence="20">
    <location>
        <begin position="2500"/>
        <end position="2598"/>
    </location>
</feature>
<feature type="region of interest" description="Y3" evidence="20">
    <location>
        <begin position="2599"/>
        <end position="2681"/>
    </location>
</feature>
<feature type="region of interest" description="Y4" evidence="20">
    <location>
        <begin position="2682"/>
        <end position="2782"/>
    </location>
</feature>
<feature type="region of interest" description="HD2" evidence="1">
    <location>
        <begin position="2800"/>
        <end position="3169"/>
    </location>
</feature>
<feature type="region of interest" description="HD3" evidence="1">
    <location>
        <begin position="3603"/>
        <end position="3828"/>
    </location>
</feature>
<feature type="active site" description="For PL-PRO activity" evidence="5">
    <location>
        <position position="1634"/>
    </location>
</feature>
<feature type="active site" description="For PL-PRO activity" evidence="5">
    <location>
        <position position="1800"/>
    </location>
</feature>
<feature type="active site" description="For PL-PRO activity" evidence="5">
    <location>
        <position position="1815"/>
    </location>
</feature>
<feature type="active site" description="For 3CL-PRO activity" evidence="7">
    <location>
        <position position="3332"/>
    </location>
</feature>
<feature type="active site" description="For 3CL-PRO activity" evidence="7">
    <location>
        <position position="3439"/>
    </location>
</feature>
<feature type="binding site" evidence="17">
    <location>
        <position position="339"/>
    </location>
    <ligand>
        <name>Zn(2+)</name>
        <dbReference type="ChEBI" id="CHEBI:29105"/>
        <label>1</label>
    </ligand>
</feature>
<feature type="binding site" evidence="17">
    <location>
        <position position="342"/>
    </location>
    <ligand>
        <name>Zn(2+)</name>
        <dbReference type="ChEBI" id="CHEBI:29105"/>
        <label>1</label>
    </ligand>
</feature>
<feature type="binding site" evidence="17">
    <location>
        <position position="358"/>
    </location>
    <ligand>
        <name>Zn(2+)</name>
        <dbReference type="ChEBI" id="CHEBI:29105"/>
        <label>1</label>
    </ligand>
</feature>
<feature type="binding site" evidence="17">
    <location>
        <position position="360"/>
    </location>
    <ligand>
        <name>Zn(2+)</name>
        <dbReference type="ChEBI" id="CHEBI:29105"/>
        <label>1</label>
    </ligand>
</feature>
<feature type="binding site" evidence="5">
    <location>
        <position position="1714"/>
    </location>
    <ligand>
        <name>Zn(2+)</name>
        <dbReference type="ChEBI" id="CHEBI:29105"/>
        <label>2</label>
    </ligand>
</feature>
<feature type="binding site" evidence="5">
    <location>
        <position position="1717"/>
    </location>
    <ligand>
        <name>Zn(2+)</name>
        <dbReference type="ChEBI" id="CHEBI:29105"/>
        <label>2</label>
    </ligand>
</feature>
<feature type="binding site" evidence="5">
    <location>
        <position position="1749"/>
    </location>
    <ligand>
        <name>Zn(2+)</name>
        <dbReference type="ChEBI" id="CHEBI:29105"/>
        <label>2</label>
    </ligand>
</feature>
<feature type="binding site" evidence="5">
    <location>
        <position position="1751"/>
    </location>
    <ligand>
        <name>Zn(2+)</name>
        <dbReference type="ChEBI" id="CHEBI:29105"/>
        <label>2</label>
    </ligand>
</feature>
<feature type="binding site" evidence="20">
    <location>
        <position position="2413"/>
    </location>
    <ligand>
        <name>Zn(2+)</name>
        <dbReference type="ChEBI" id="CHEBI:29105"/>
        <label>3</label>
    </ligand>
</feature>
<feature type="binding site" evidence="20">
    <location>
        <position position="2418"/>
    </location>
    <ligand>
        <name>Zn(2+)</name>
        <dbReference type="ChEBI" id="CHEBI:29105"/>
        <label>3</label>
    </ligand>
</feature>
<feature type="binding site" evidence="20">
    <location>
        <position position="2423"/>
    </location>
    <ligand>
        <name>Zn(2+)</name>
        <dbReference type="ChEBI" id="CHEBI:29105"/>
        <label>3</label>
    </ligand>
</feature>
<feature type="binding site" evidence="20">
    <location>
        <position position="2426"/>
    </location>
    <ligand>
        <name>Zn(2+)</name>
        <dbReference type="ChEBI" id="CHEBI:29105"/>
        <label>3</label>
    </ligand>
</feature>
<feature type="binding site" evidence="20">
    <location>
        <position position="2459"/>
    </location>
    <ligand>
        <name>Zn(2+)</name>
        <dbReference type="ChEBI" id="CHEBI:29105"/>
        <label>4</label>
    </ligand>
</feature>
<feature type="binding site" evidence="20">
    <location>
        <position position="2462"/>
    </location>
    <ligand>
        <name>Zn(2+)</name>
        <dbReference type="ChEBI" id="CHEBI:29105"/>
        <label>4</label>
    </ligand>
</feature>
<feature type="binding site" evidence="20">
    <location>
        <position position="2466"/>
    </location>
    <ligand>
        <name>Zn(2+)</name>
        <dbReference type="ChEBI" id="CHEBI:29105"/>
        <label>4</label>
    </ligand>
</feature>
<feature type="binding site" evidence="20">
    <location>
        <position position="2469"/>
    </location>
    <ligand>
        <name>Zn(2+)</name>
        <dbReference type="ChEBI" id="CHEBI:29105"/>
        <label>4</label>
    </ligand>
</feature>
<feature type="binding site" evidence="14">
    <location>
        <position position="4355"/>
    </location>
    <ligand>
        <name>Zn(2+)</name>
        <dbReference type="ChEBI" id="CHEBI:29105"/>
        <label>5</label>
    </ligand>
</feature>
<feature type="binding site" evidence="14">
    <location>
        <position position="4358"/>
    </location>
    <ligand>
        <name>Zn(2+)</name>
        <dbReference type="ChEBI" id="CHEBI:29105"/>
        <label>5</label>
    </ligand>
</feature>
<feature type="binding site" evidence="14">
    <location>
        <position position="4364"/>
    </location>
    <ligand>
        <name>Zn(2+)</name>
        <dbReference type="ChEBI" id="CHEBI:29105"/>
        <label>5</label>
    </ligand>
</feature>
<feature type="binding site" evidence="14">
    <location>
        <position position="4371"/>
    </location>
    <ligand>
        <name>Zn(2+)</name>
        <dbReference type="ChEBI" id="CHEBI:29105"/>
        <label>5</label>
    </ligand>
</feature>
<feature type="binding site" evidence="14">
    <location>
        <position position="4397"/>
    </location>
    <ligand>
        <name>Zn(2+)</name>
        <dbReference type="ChEBI" id="CHEBI:29105"/>
        <label>6</label>
    </ligand>
</feature>
<feature type="binding site" evidence="14">
    <location>
        <position position="4400"/>
    </location>
    <ligand>
        <name>Zn(2+)</name>
        <dbReference type="ChEBI" id="CHEBI:29105"/>
        <label>6</label>
    </ligand>
</feature>
<feature type="binding site" evidence="14">
    <location>
        <position position="4408"/>
    </location>
    <ligand>
        <name>Zn(2+)</name>
        <dbReference type="ChEBI" id="CHEBI:29105"/>
        <label>6</label>
    </ligand>
</feature>
<feature type="binding site" evidence="14">
    <location>
        <position position="4410"/>
    </location>
    <ligand>
        <name>Zn(2+)</name>
        <dbReference type="ChEBI" id="CHEBI:29105"/>
        <label>6</label>
    </ligand>
</feature>
<feature type="site" description="Cleavage" evidence="3">
    <location>
        <begin position="195"/>
        <end position="196"/>
    </location>
</feature>
<feature type="site" description="Cleavage; by PL-PRO" evidence="3">
    <location>
        <begin position="847"/>
        <end position="848"/>
    </location>
</feature>
<feature type="site" description="Cleavage; by PL-PRO" evidence="3">
    <location>
        <begin position="2784"/>
        <end position="2785"/>
    </location>
</feature>
<feature type="site" description="Cleavage; by 3CL-PRO" evidence="3">
    <location>
        <begin position="3291"/>
        <end position="3292"/>
    </location>
</feature>
<feature type="site" description="Cleavage; by 3CL-PRO" evidence="3">
    <location>
        <begin position="3597"/>
        <end position="3598"/>
    </location>
</feature>
<feature type="site" description="Cleavage; by 3CL-PRO" evidence="3">
    <location>
        <begin position="3889"/>
        <end position="3890"/>
    </location>
</feature>
<feature type="site" description="Cleavage; by 3CL-PRO" evidence="3">
    <location>
        <begin position="3972"/>
        <end position="3973"/>
    </location>
</feature>
<feature type="site" description="Cleavage; by 3CL-PRO" evidence="3">
    <location>
        <begin position="4171"/>
        <end position="4172"/>
    </location>
</feature>
<feature type="site" description="Cleavage; by 3CL-PRO" evidence="3">
    <location>
        <begin position="4281"/>
        <end position="4282"/>
    </location>
</feature>
<feature type="site" description="Cleavage; by 3CL-PRO" evidence="3">
    <location>
        <begin position="4420"/>
        <end position="4421"/>
    </location>
</feature>
<feature type="disulfide bond" evidence="21">
    <location>
        <begin position="2275"/>
        <end position="2303"/>
    </location>
</feature>
<feature type="disulfide bond" evidence="21">
    <location>
        <begin position="2293"/>
        <end position="2300"/>
    </location>
</feature>
<feature type="helix" evidence="24">
    <location>
        <begin position="3302"/>
        <end position="3305"/>
    </location>
</feature>
<feature type="strand" evidence="24">
    <location>
        <begin position="3308"/>
        <end position="3313"/>
    </location>
</feature>
<feature type="strand" evidence="24">
    <location>
        <begin position="3316"/>
        <end position="3323"/>
    </location>
</feature>
<feature type="strand" evidence="24">
    <location>
        <begin position="3326"/>
        <end position="3330"/>
    </location>
</feature>
<feature type="helix" evidence="24">
    <location>
        <begin position="3331"/>
        <end position="3334"/>
    </location>
</feature>
<feature type="helix" evidence="24">
    <location>
        <begin position="3337"/>
        <end position="3339"/>
    </location>
</feature>
<feature type="helix" evidence="24">
    <location>
        <begin position="3345"/>
        <end position="3350"/>
    </location>
</feature>
<feature type="helix" evidence="24">
    <location>
        <begin position="3354"/>
        <end position="3356"/>
    </location>
</feature>
<feature type="strand" evidence="24">
    <location>
        <begin position="3358"/>
        <end position="3360"/>
    </location>
</feature>
<feature type="strand" evidence="24">
    <location>
        <begin position="3363"/>
        <end position="3365"/>
    </location>
</feature>
<feature type="strand" evidence="25">
    <location>
        <begin position="3367"/>
        <end position="3369"/>
    </location>
</feature>
<feature type="strand" evidence="24">
    <location>
        <begin position="3371"/>
        <end position="3377"/>
    </location>
</feature>
<feature type="strand" evidence="24">
    <location>
        <begin position="3380"/>
        <end position="3387"/>
    </location>
</feature>
<feature type="strand" evidence="24">
    <location>
        <begin position="3394"/>
        <end position="3397"/>
    </location>
</feature>
<feature type="strand" evidence="24">
    <location>
        <begin position="3405"/>
        <end position="3412"/>
    </location>
</feature>
<feature type="strand" evidence="24">
    <location>
        <begin position="3415"/>
        <end position="3423"/>
    </location>
</feature>
<feature type="strand" evidence="24">
    <location>
        <begin position="3442"/>
        <end position="3447"/>
    </location>
</feature>
<feature type="strand" evidence="24">
    <location>
        <begin position="3450"/>
        <end position="3462"/>
    </location>
</feature>
<feature type="strand" evidence="24">
    <location>
        <begin position="3465"/>
        <end position="3469"/>
    </location>
</feature>
<feature type="helix" evidence="24">
    <location>
        <begin position="3476"/>
        <end position="3478"/>
    </location>
</feature>
<feature type="strand" evidence="24">
    <location>
        <begin position="3481"/>
        <end position="3484"/>
    </location>
</feature>
<feature type="helix" evidence="24">
    <location>
        <begin position="3495"/>
        <end position="3507"/>
    </location>
</feature>
<feature type="helix" evidence="24">
    <location>
        <begin position="3521"/>
        <end position="3530"/>
    </location>
</feature>
<feature type="helix" evidence="24">
    <location>
        <begin position="3540"/>
        <end position="3549"/>
    </location>
</feature>
<feature type="helix" evidence="24">
    <location>
        <begin position="3553"/>
        <end position="3565"/>
    </location>
</feature>
<feature type="strand" evidence="24">
    <location>
        <begin position="3575"/>
        <end position="3577"/>
    </location>
</feature>
<feature type="helix" evidence="24">
    <location>
        <begin position="3584"/>
        <end position="3591"/>
    </location>
</feature>
<comment type="function">
    <text evidence="1">The papain-like proteinase (PL-PRO) is responsible for the cleavages located at the N-terminus of replicase polyprotein. In addition, PL-PRO possesses a deubiquitinating/deISGylating activity and processes both 'Lys-48'- and 'Lys-63'-linked polyubiquitin chains from cellular substrates. Antagonizes innate immune induction of type I interferon by blocking the phosphorylation, dimerization and subsequent nuclear translocation of host IRF-3 (By similarity).</text>
</comment>
<comment type="function">
    <molecule>3C-like proteinase nsp5</molecule>
    <text evidence="7">Responsible for the majority of cleavages as it cleaves the C-terminus of replicase polyprotein at 11 sites. Recognizes substrates containing the core sequence [ILMVF]-Q-|-[SGACN]. Inhibited by the substrate-analog Cbz-Val-Asn-Ser-Thr-Leu-Gln-CMK. Also contains an ADP-ribose-1''-phosphate (ADRP)-binding function (By similarity).</text>
</comment>
<comment type="function">
    <text evidence="1">Nsp7-nsp8 hexadecamer may possibly confer processivity to the polymerase, maybe by binding to dsRNA or by producing primers utilized by the latter.</text>
</comment>
<comment type="function">
    <molecule>RNA-capping enzyme subunit nsp9</molecule>
    <text evidence="2">Catalytic subunit of viral RNA capping enzyme which catalyzes the RNA guanylyltransferase reaction for genomic and sub-genomic RNAs. The kinase-like NiRAN domain of NSP12 transfers RNA to the amino terminus of NSP9, forming a covalent RNA-protein intermediate. Subsequently, the NiRAN domain transfers RNA to GDP, forming the core cap structure GpppA-RNA. The NSP14 and NSP16 methyltransferases then add methyl groups to form functional cap structures.</text>
</comment>
<comment type="function">
    <molecule>Non-structural protein 1</molecule>
    <text evidence="1">Binds to the 40S ribosomal subunit and inhibits host translation. The nsp1-40S ribosome complex further induces an endonucleolytic cleavage near the 5'UTR of host mRNAs, targeting them for degradation. By suppressing host gene expression, nsp1 facilitates efficient viral gene expression in infected cells and evasion from host immune response (By similarity).</text>
</comment>
<comment type="catalytic activity">
    <molecule>Non-structural protein 3</molecule>
    <reaction evidence="2">
        <text>Thiol-dependent hydrolysis of ester, thioester, amide, peptide and isopeptide bonds formed by the C-terminal Gly of ubiquitin (a 76-residue protein attached to proteins as an intracellular targeting signal).</text>
        <dbReference type="EC" id="3.4.19.12"/>
    </reaction>
</comment>
<comment type="catalytic activity">
    <molecule>3C-like proteinase nsp5</molecule>
    <reaction evidence="2">
        <text>TSAVLQ-|-SGFRK-NH2 and SGVTFQ-|-GKFKK the two peptides corresponding to the two self-cleavage sites of the SARS 3C-like proteinase are the two most reactive peptide substrates. The enzyme exhibits a strong preference for substrates containing Gln at P1 position and Leu at P2 position.</text>
        <dbReference type="EC" id="3.4.22.69"/>
    </reaction>
</comment>
<comment type="catalytic activity">
    <molecule>RNA-capping enzyme subunit nsp9</molecule>
    <reaction evidence="2">
        <text>a 5'-end diphospho-ribonucleoside in mRNA + GTP + H(+) = a 5'-end (5'-triphosphoguanosine)-ribonucleoside in mRNA + diphosphate</text>
        <dbReference type="Rhea" id="RHEA:67012"/>
        <dbReference type="Rhea" id="RHEA-COMP:17165"/>
        <dbReference type="Rhea" id="RHEA-COMP:17166"/>
        <dbReference type="ChEBI" id="CHEBI:15378"/>
        <dbReference type="ChEBI" id="CHEBI:33019"/>
        <dbReference type="ChEBI" id="CHEBI:37565"/>
        <dbReference type="ChEBI" id="CHEBI:167616"/>
        <dbReference type="ChEBI" id="CHEBI:167617"/>
        <dbReference type="EC" id="2.7.7.50"/>
    </reaction>
    <physiologicalReaction direction="right-to-left" evidence="2">
        <dbReference type="Rhea" id="RHEA:67014"/>
    </physiologicalReaction>
</comment>
<comment type="subunit">
    <text evidence="1">3CL-PRO exists as monomer and homodimer. Eight copies of nsp7 and eight copies of nsp8 assemble to form a heterohexadecamer. Nsp9 is a dimer. Nsp10 forms a dodecamer (By similarity).</text>
</comment>
<comment type="subcellular location">
    <molecule>Non-structural protein 3</molecule>
    <subcellularLocation>
        <location evidence="23">Host membrane</location>
        <topology evidence="23">Multi-pass membrane protein</topology>
    </subcellularLocation>
</comment>
<comment type="subcellular location">
    <molecule>Non-structural protein 4</molecule>
    <subcellularLocation>
        <location evidence="23">Host membrane</location>
        <topology evidence="23">Multi-pass membrane protein</topology>
    </subcellularLocation>
</comment>
<comment type="subcellular location">
    <molecule>Non-structural protein 6</molecule>
    <subcellularLocation>
        <location evidence="23">Host membrane</location>
        <topology evidence="23">Multi-pass membrane protein</topology>
    </subcellularLocation>
</comment>
<comment type="subcellular location">
    <molecule>Non-structural protein 7</molecule>
    <subcellularLocation>
        <location evidence="1">Host cytoplasm</location>
        <location evidence="1">Host perinuclear region</location>
    </subcellularLocation>
    <text evidence="1">nsp7, nsp8, nsp9 and nsp10 are localized in cytoplasmic foci, largely perinuclear. Late in infection, they merge into confluent complexes (By similarity).</text>
</comment>
<comment type="subcellular location">
    <molecule>Non-structural protein 8</molecule>
    <subcellularLocation>
        <location evidence="1">Host cytoplasm</location>
        <location evidence="1">Host perinuclear region</location>
    </subcellularLocation>
    <text evidence="1">nsp7, nsp8, nsp9 and nsp10 are localized in cytoplasmic foci, largely perinuclear. Late in infection, they merge into confluent complexes (By similarity).</text>
</comment>
<comment type="subcellular location">
    <molecule>RNA-capping enzyme subunit nsp9</molecule>
    <subcellularLocation>
        <location evidence="1">Host cytoplasm</location>
        <location evidence="1">Host perinuclear region</location>
    </subcellularLocation>
    <text evidence="1">nsp7, nsp8, nsp9 and nsp10 are localized in cytoplasmic foci, largely perinuclear. Late in infection, they merge into confluent complexes (By similarity).</text>
</comment>
<comment type="subcellular location">
    <molecule>Non-structural protein 10</molecule>
    <subcellularLocation>
        <location evidence="1">Host cytoplasm</location>
        <location evidence="1">Host perinuclear region</location>
    </subcellularLocation>
    <text evidence="1">nsp7, nsp8, nsp9 and nsp10 are localized in cytoplasmic foci, largely perinuclear. Late in infection, they merge into confluent complexes (By similarity).</text>
</comment>
<comment type="alternative products">
    <event type="ribosomal frameshifting"/>
    <isoform>
        <id>P0C6T4-1</id>
        <name>Replicase polyprotein 1a</name>
        <name>pp1a</name>
        <name>ORF1a polyprotein</name>
        <sequence type="displayed"/>
    </isoform>
    <isoform>
        <id>P0C6W3-1</id>
        <name>Replicase polyprotein 1ab</name>
        <name>pp1ab</name>
        <sequence type="external"/>
    </isoform>
</comment>
<comment type="domain">
    <text evidence="1">The hydrophobic domains (HD) could mediate the membrane association of the replication complex and thereby alter the architecture of the host cell membrane.</text>
</comment>
<comment type="PTM">
    <text evidence="1">Specific enzymatic cleavages in vivo by its own proteases yield mature proteins. 3CL-PRO and PL-PRO proteinases are autocatalytically processed (By similarity).</text>
</comment>
<comment type="miscellaneous">
    <molecule>Isoform Replicase polyprotein 1a</molecule>
    <text>Produced by conventional translation.</text>
</comment>
<comment type="similarity">
    <text evidence="23">Belongs to the coronaviruses polyprotein 1ab family.</text>
</comment>
<organism>
    <name type="scientific">Bat coronavirus HKU4</name>
    <name type="common">BtCoV</name>
    <name type="synonym">BtCoV/HKU4/2004</name>
    <dbReference type="NCBI Taxonomy" id="694007"/>
    <lineage>
        <taxon>Viruses</taxon>
        <taxon>Riboviria</taxon>
        <taxon>Orthornavirae</taxon>
        <taxon>Pisuviricota</taxon>
        <taxon>Pisoniviricetes</taxon>
        <taxon>Nidovirales</taxon>
        <taxon>Cornidovirineae</taxon>
        <taxon>Coronaviridae</taxon>
        <taxon>Orthocoronavirinae</taxon>
        <taxon>Betacoronavirus</taxon>
        <taxon>Merbecovirus</taxon>
    </lineage>
</organism>
<proteinExistence type="evidence at protein level"/>
<protein>
    <recommendedName>
        <fullName>Replicase polyprotein 1a</fullName>
        <shortName>pp1a</shortName>
    </recommendedName>
    <alternativeName>
        <fullName>ORF1a polyprotein</fullName>
    </alternativeName>
    <component>
        <recommendedName>
            <fullName>Non-structural protein 1</fullName>
            <shortName>nsp1</shortName>
        </recommendedName>
        <alternativeName>
            <fullName>Leader protein</fullName>
        </alternativeName>
    </component>
    <component>
        <recommendedName>
            <fullName>Non-structural protein 2</fullName>
            <shortName>nsp2</shortName>
        </recommendedName>
        <alternativeName>
            <fullName>p65 homolog</fullName>
        </alternativeName>
    </component>
    <component>
        <recommendedName>
            <fullName>Non-structural protein 3</fullName>
            <shortName>nsp3</shortName>
            <ecNumber>3.4.19.12</ecNumber>
            <ecNumber>3.4.22.-</ecNumber>
        </recommendedName>
        <alternativeName>
            <fullName>PL2-PRO</fullName>
        </alternativeName>
        <alternativeName>
            <fullName>Papain-like proteinase</fullName>
            <shortName>PL-PRO</shortName>
        </alternativeName>
    </component>
    <component>
        <recommendedName>
            <fullName>Non-structural protein 4</fullName>
            <shortName>nsp4</shortName>
        </recommendedName>
    </component>
    <component>
        <recommendedName>
            <fullName>3C-like proteinase nsp5</fullName>
            <shortName>3CL-PRO</shortName>
            <shortName>3CLp</shortName>
            <ecNumber>3.4.22.69</ecNumber>
        </recommendedName>
        <alternativeName>
            <fullName>nsp5</fullName>
        </alternativeName>
    </component>
    <component>
        <recommendedName>
            <fullName>Non-structural protein 6</fullName>
            <shortName>nsp6</shortName>
        </recommendedName>
    </component>
    <component>
        <recommendedName>
            <fullName>Non-structural protein 7</fullName>
            <shortName>nsp7</shortName>
        </recommendedName>
    </component>
    <component>
        <recommendedName>
            <fullName>Non-structural protein 8</fullName>
            <shortName>nsp8</shortName>
        </recommendedName>
    </component>
    <component>
        <recommendedName>
            <fullName>RNA-capping enzyme subunit nsp9</fullName>
        </recommendedName>
        <alternativeName>
            <fullName>Non-structural protein 9</fullName>
            <shortName>nsp9</shortName>
            <ecNumber>2.7.7.50</ecNumber>
        </alternativeName>
    </component>
    <component>
        <recommendedName>
            <fullName>Non-structural protein 10</fullName>
            <shortName>nsp10</shortName>
        </recommendedName>
        <alternativeName>
            <fullName>Growth factor-like peptide</fullName>
            <shortName>GFL</shortName>
        </alternativeName>
    </component>
    <component>
        <recommendedName>
            <fullName>Non-structural protein 11</fullName>
            <shortName>nsp11</shortName>
        </recommendedName>
    </component>
</protein>